<keyword id="KW-0068">Autocatalytic cleavage</keyword>
<keyword id="KW-0963">Cytoplasm</keyword>
<keyword id="KW-0210">Decarboxylase</keyword>
<keyword id="KW-0456">Lyase</keyword>
<keyword id="KW-0566">Pantothenate biosynthesis</keyword>
<keyword id="KW-0670">Pyruvate</keyword>
<keyword id="KW-0704">Schiff base</keyword>
<keyword id="KW-0865">Zymogen</keyword>
<accession>A5CNC0</accession>
<protein>
    <recommendedName>
        <fullName evidence="1">Aspartate 1-decarboxylase</fullName>
        <ecNumber evidence="1">4.1.1.11</ecNumber>
    </recommendedName>
    <alternativeName>
        <fullName evidence="1">Aspartate alpha-decarboxylase</fullName>
    </alternativeName>
    <component>
        <recommendedName>
            <fullName evidence="1">Aspartate 1-decarboxylase beta chain</fullName>
        </recommendedName>
    </component>
    <component>
        <recommendedName>
            <fullName evidence="1">Aspartate 1-decarboxylase alpha chain</fullName>
        </recommendedName>
    </component>
</protein>
<organism>
    <name type="scientific">Clavibacter michiganensis subsp. michiganensis (strain NCPPB 382)</name>
    <dbReference type="NCBI Taxonomy" id="443906"/>
    <lineage>
        <taxon>Bacteria</taxon>
        <taxon>Bacillati</taxon>
        <taxon>Actinomycetota</taxon>
        <taxon>Actinomycetes</taxon>
        <taxon>Micrococcales</taxon>
        <taxon>Microbacteriaceae</taxon>
        <taxon>Clavibacter</taxon>
    </lineage>
</organism>
<name>PAND_CLAM3</name>
<sequence>MLRTMMTAKIHRATVTHADLHYVGSVTVDRDLLDAADILVGERVSIVDVTNGARLDTYTIAGERGSGVLGINGAAAHLVDVGDVVILIAYGQMTTEEARALEPRVVHVDVGNRIRAVDADPTAPPAPGLERSPLAEPV</sequence>
<feature type="chain" id="PRO_1000026171" description="Aspartate 1-decarboxylase beta chain" evidence="1">
    <location>
        <begin position="1"/>
        <end position="24"/>
    </location>
</feature>
<feature type="chain" id="PRO_0000316062" description="Aspartate 1-decarboxylase alpha chain" evidence="1">
    <location>
        <begin position="25"/>
        <end position="138"/>
    </location>
</feature>
<feature type="region of interest" description="Disordered" evidence="2">
    <location>
        <begin position="117"/>
        <end position="138"/>
    </location>
</feature>
<feature type="active site" description="Schiff-base intermediate with substrate; via pyruvic acid" evidence="1">
    <location>
        <position position="25"/>
    </location>
</feature>
<feature type="active site" description="Proton donor" evidence="1">
    <location>
        <position position="58"/>
    </location>
</feature>
<feature type="binding site" evidence="1">
    <location>
        <position position="57"/>
    </location>
    <ligand>
        <name>substrate</name>
    </ligand>
</feature>
<feature type="binding site" evidence="1">
    <location>
        <begin position="73"/>
        <end position="75"/>
    </location>
    <ligand>
        <name>substrate</name>
    </ligand>
</feature>
<feature type="modified residue" description="Pyruvic acid (Ser)" evidence="1">
    <location>
        <position position="25"/>
    </location>
</feature>
<gene>
    <name evidence="1" type="primary">panD</name>
    <name type="ordered locus">CMM_0532</name>
</gene>
<reference key="1">
    <citation type="journal article" date="2008" name="J. Bacteriol.">
        <title>The genome sequence of the tomato-pathogenic actinomycete Clavibacter michiganensis subsp. michiganensis NCPPB382 reveals a large island involved in pathogenicity.</title>
        <authorList>
            <person name="Gartemann K.-H."/>
            <person name="Abt B."/>
            <person name="Bekel T."/>
            <person name="Burger A."/>
            <person name="Engemann J."/>
            <person name="Fluegel M."/>
            <person name="Gaigalat L."/>
            <person name="Goesmann A."/>
            <person name="Graefen I."/>
            <person name="Kalinowski J."/>
            <person name="Kaup O."/>
            <person name="Kirchner O."/>
            <person name="Krause L."/>
            <person name="Linke B."/>
            <person name="McHardy A."/>
            <person name="Meyer F."/>
            <person name="Pohle S."/>
            <person name="Rueckert C."/>
            <person name="Schneiker S."/>
            <person name="Zellermann E.-M."/>
            <person name="Puehler A."/>
            <person name="Eichenlaub R."/>
            <person name="Kaiser O."/>
            <person name="Bartels D."/>
        </authorList>
    </citation>
    <scope>NUCLEOTIDE SEQUENCE [LARGE SCALE GENOMIC DNA]</scope>
    <source>
        <strain>NCPPB 382</strain>
    </source>
</reference>
<comment type="function">
    <text evidence="1">Catalyzes the pyruvoyl-dependent decarboxylation of aspartate to produce beta-alanine.</text>
</comment>
<comment type="catalytic activity">
    <reaction evidence="1">
        <text>L-aspartate + H(+) = beta-alanine + CO2</text>
        <dbReference type="Rhea" id="RHEA:19497"/>
        <dbReference type="ChEBI" id="CHEBI:15378"/>
        <dbReference type="ChEBI" id="CHEBI:16526"/>
        <dbReference type="ChEBI" id="CHEBI:29991"/>
        <dbReference type="ChEBI" id="CHEBI:57966"/>
        <dbReference type="EC" id="4.1.1.11"/>
    </reaction>
</comment>
<comment type="cofactor">
    <cofactor evidence="1">
        <name>pyruvate</name>
        <dbReference type="ChEBI" id="CHEBI:15361"/>
    </cofactor>
    <text evidence="1">Binds 1 pyruvoyl group covalently per subunit.</text>
</comment>
<comment type="pathway">
    <text evidence="1">Cofactor biosynthesis; (R)-pantothenate biosynthesis; beta-alanine from L-aspartate: step 1/1.</text>
</comment>
<comment type="subunit">
    <text evidence="1">Heterooctamer of four alpha and four beta subunits.</text>
</comment>
<comment type="subcellular location">
    <subcellularLocation>
        <location evidence="1">Cytoplasm</location>
    </subcellularLocation>
</comment>
<comment type="PTM">
    <text evidence="1">Is synthesized initially as an inactive proenzyme, which is activated by self-cleavage at a specific serine bond to produce a beta-subunit with a hydroxyl group at its C-terminus and an alpha-subunit with a pyruvoyl group at its N-terminus.</text>
</comment>
<comment type="similarity">
    <text evidence="1">Belongs to the PanD family.</text>
</comment>
<proteinExistence type="inferred from homology"/>
<evidence type="ECO:0000255" key="1">
    <source>
        <dbReference type="HAMAP-Rule" id="MF_00446"/>
    </source>
</evidence>
<evidence type="ECO:0000256" key="2">
    <source>
        <dbReference type="SAM" id="MobiDB-lite"/>
    </source>
</evidence>
<dbReference type="EC" id="4.1.1.11" evidence="1"/>
<dbReference type="EMBL" id="AM711867">
    <property type="protein sequence ID" value="CAN00557.1"/>
    <property type="molecule type" value="Genomic_DNA"/>
</dbReference>
<dbReference type="RefSeq" id="WP_011931752.1">
    <property type="nucleotide sequence ID" value="NC_009480.1"/>
</dbReference>
<dbReference type="SMR" id="A5CNC0"/>
<dbReference type="KEGG" id="cmi:CMM_0532"/>
<dbReference type="eggNOG" id="COG0853">
    <property type="taxonomic scope" value="Bacteria"/>
</dbReference>
<dbReference type="HOGENOM" id="CLU_115305_2_0_11"/>
<dbReference type="OrthoDB" id="9803983at2"/>
<dbReference type="UniPathway" id="UPA00028">
    <property type="reaction ID" value="UER00002"/>
</dbReference>
<dbReference type="Proteomes" id="UP000001564">
    <property type="component" value="Chromosome"/>
</dbReference>
<dbReference type="GO" id="GO:0005829">
    <property type="term" value="C:cytosol"/>
    <property type="evidence" value="ECO:0007669"/>
    <property type="project" value="TreeGrafter"/>
</dbReference>
<dbReference type="GO" id="GO:0004068">
    <property type="term" value="F:aspartate 1-decarboxylase activity"/>
    <property type="evidence" value="ECO:0007669"/>
    <property type="project" value="UniProtKB-UniRule"/>
</dbReference>
<dbReference type="GO" id="GO:0006523">
    <property type="term" value="P:alanine biosynthetic process"/>
    <property type="evidence" value="ECO:0007669"/>
    <property type="project" value="InterPro"/>
</dbReference>
<dbReference type="GO" id="GO:0015940">
    <property type="term" value="P:pantothenate biosynthetic process"/>
    <property type="evidence" value="ECO:0007669"/>
    <property type="project" value="UniProtKB-UniRule"/>
</dbReference>
<dbReference type="CDD" id="cd06919">
    <property type="entry name" value="Asp_decarbox"/>
    <property type="match status" value="1"/>
</dbReference>
<dbReference type="Gene3D" id="2.40.40.20">
    <property type="match status" value="1"/>
</dbReference>
<dbReference type="HAMAP" id="MF_00446">
    <property type="entry name" value="PanD"/>
    <property type="match status" value="1"/>
</dbReference>
<dbReference type="InterPro" id="IPR009010">
    <property type="entry name" value="Asp_de-COase-like_dom_sf"/>
</dbReference>
<dbReference type="InterPro" id="IPR003190">
    <property type="entry name" value="Asp_decarbox"/>
</dbReference>
<dbReference type="NCBIfam" id="TIGR00223">
    <property type="entry name" value="panD"/>
    <property type="match status" value="1"/>
</dbReference>
<dbReference type="PANTHER" id="PTHR21012">
    <property type="entry name" value="ASPARTATE 1-DECARBOXYLASE"/>
    <property type="match status" value="1"/>
</dbReference>
<dbReference type="PANTHER" id="PTHR21012:SF0">
    <property type="entry name" value="ASPARTATE 1-DECARBOXYLASE"/>
    <property type="match status" value="1"/>
</dbReference>
<dbReference type="Pfam" id="PF02261">
    <property type="entry name" value="Asp_decarbox"/>
    <property type="match status" value="1"/>
</dbReference>
<dbReference type="PIRSF" id="PIRSF006246">
    <property type="entry name" value="Asp_decarbox"/>
    <property type="match status" value="1"/>
</dbReference>
<dbReference type="SUPFAM" id="SSF50692">
    <property type="entry name" value="ADC-like"/>
    <property type="match status" value="1"/>
</dbReference>